<gene>
    <name type="primary">RPS6KB1</name>
</gene>
<keyword id="KW-0007">Acetylation</keyword>
<keyword id="KW-0024">Alternative initiation</keyword>
<keyword id="KW-0053">Apoptosis</keyword>
<keyword id="KW-0067">ATP-binding</keyword>
<keyword id="KW-0963">Cytoplasm</keyword>
<keyword id="KW-0418">Kinase</keyword>
<keyword id="KW-0472">Membrane</keyword>
<keyword id="KW-0496">Mitochondrion</keyword>
<keyword id="KW-1000">Mitochondrion outer membrane</keyword>
<keyword id="KW-0547">Nucleotide-binding</keyword>
<keyword id="KW-0597">Phosphoprotein</keyword>
<keyword id="KW-1185">Reference proteome</keyword>
<keyword id="KW-0723">Serine/threonine-protein kinase</keyword>
<keyword id="KW-0770">Synapse</keyword>
<keyword id="KW-0771">Synaptosome</keyword>
<keyword id="KW-0808">Transferase</keyword>
<sequence>MRRRRRRDGFYPAPDFRDREAEDMAGVFDIDLDQPEDAGSEDELEEGGQLNESMDHGGVGPYELGMEHCEKFEISETSVNRGPEKIRPECFELLRVLGKGGYGKVFQVRKVTGANTGKIFAMKVLKKAMIVRNAKDTAHTKAERNILEEVKHPFIVDLIYAFQTGGKLYLILEYLSGGELFMQLEREGIFMEDTACFYLAEISMALGHLHQKGIIYRDLKPENIMLNHQGHVKLTDFGLCKESIHDGTVTHTFCGTIEYMAPEILMRSGHNRAVDWWSLGALMYDMLTGAPPFTGENRKKTIDKILKCKLNLPPYLTQEARDLLKKLLKRNAASRLGAGPGDAGEVQAHPFFRHINWEELLARKVEPPFKPLLQSEEDVSQFDSKFTRQTPVDSPDDSTLSESANQVFLGFTYVAPSVLESVKEKFSFEPKIRSPRRFIGSPRTPVSPVKFSPGDFWGRGASASTANPQTPVEYPMETSGIEQMDVTTSGEASAPLPIRQPNSGPYKKQAFPMISKRPEHLRMNL</sequence>
<feature type="chain" id="PRO_0000024346" description="Ribosomal protein S6 kinase beta-1">
    <location>
        <begin position="1"/>
        <end position="525"/>
    </location>
</feature>
<feature type="domain" description="Protein kinase" evidence="5">
    <location>
        <begin position="91"/>
        <end position="352"/>
    </location>
</feature>
<feature type="domain" description="AGC-kinase C-terminal" evidence="6">
    <location>
        <begin position="353"/>
        <end position="423"/>
    </location>
</feature>
<feature type="region of interest" description="Disordered" evidence="8">
    <location>
        <begin position="1"/>
        <end position="54"/>
    </location>
</feature>
<feature type="region of interest" description="Disordered" evidence="8">
    <location>
        <begin position="380"/>
        <end position="399"/>
    </location>
</feature>
<feature type="region of interest" description="Autoinhibitory domain">
    <location>
        <begin position="424"/>
        <end position="525"/>
    </location>
</feature>
<feature type="region of interest" description="Disordered" evidence="8">
    <location>
        <begin position="486"/>
        <end position="509"/>
    </location>
</feature>
<feature type="short sequence motif" description="TOS motif">
    <location>
        <begin position="28"/>
        <end position="32"/>
    </location>
</feature>
<feature type="compositionally biased region" description="Acidic residues" evidence="8">
    <location>
        <begin position="30"/>
        <end position="46"/>
    </location>
</feature>
<feature type="compositionally biased region" description="Polar residues" evidence="8">
    <location>
        <begin position="381"/>
        <end position="399"/>
    </location>
</feature>
<feature type="active site" description="Proton acceptor" evidence="5 7">
    <location>
        <position position="218"/>
    </location>
</feature>
<feature type="binding site" evidence="5">
    <location>
        <begin position="97"/>
        <end position="105"/>
    </location>
    <ligand>
        <name>ATP</name>
        <dbReference type="ChEBI" id="CHEBI:30616"/>
    </ligand>
</feature>
<feature type="binding site" evidence="5">
    <location>
        <position position="123"/>
    </location>
    <ligand>
        <name>ATP</name>
        <dbReference type="ChEBI" id="CHEBI:30616"/>
    </ligand>
</feature>
<feature type="modified residue" description="Phosphothreonine; by PDPK1" evidence="2">
    <location>
        <position position="252"/>
    </location>
</feature>
<feature type="modified residue" description="Phosphoserine" evidence="2">
    <location>
        <position position="394"/>
    </location>
</feature>
<feature type="modified residue" description="Phosphothreonine; by MTOR, NEK6 and NEK7" evidence="3">
    <location>
        <position position="412"/>
    </location>
</feature>
<feature type="modified residue" description="Phosphoserine" evidence="3">
    <location>
        <position position="434"/>
    </location>
</feature>
<feature type="modified residue" description="Phosphoserine" evidence="2">
    <location>
        <position position="441"/>
    </location>
</feature>
<feature type="modified residue" description="Phosphothreonine" evidence="2">
    <location>
        <position position="444"/>
    </location>
</feature>
<feature type="modified residue" description="Phosphoserine" evidence="2">
    <location>
        <position position="447"/>
    </location>
</feature>
<feature type="modified residue" description="Phosphoserine" evidence="2">
    <location>
        <position position="452"/>
    </location>
</feature>
<feature type="modified residue" description="N6-acetyllysine" evidence="3">
    <location>
        <position position="516"/>
    </location>
</feature>
<feature type="splice variant" id="VSP_018841" description="In isoform Alpha II." evidence="9">
    <location>
        <begin position="1"/>
        <end position="23"/>
    </location>
</feature>
<dbReference type="EC" id="2.7.11.1" evidence="2"/>
<dbReference type="EMBL" id="X54415">
    <property type="protein sequence ID" value="CAA38279.1"/>
    <property type="molecule type" value="mRNA"/>
</dbReference>
<dbReference type="PIR" id="S12906">
    <property type="entry name" value="S12906"/>
</dbReference>
<dbReference type="RefSeq" id="NP_001095160.1">
    <molecule id="P67998-1"/>
    <property type="nucleotide sequence ID" value="NM_001101690.1"/>
</dbReference>
<dbReference type="SMR" id="P67998"/>
<dbReference type="FunCoup" id="P67998">
    <property type="interactions" value="2375"/>
</dbReference>
<dbReference type="STRING" id="9986.ENSOCUP00000003969"/>
<dbReference type="PaxDb" id="9986-ENSOCUP00000003969"/>
<dbReference type="GeneID" id="100009260"/>
<dbReference type="KEGG" id="ocu:100009260"/>
<dbReference type="CTD" id="6198"/>
<dbReference type="eggNOG" id="KOG0598">
    <property type="taxonomic scope" value="Eukaryota"/>
</dbReference>
<dbReference type="InParanoid" id="P67998"/>
<dbReference type="OrthoDB" id="63267at2759"/>
<dbReference type="Proteomes" id="UP000001811">
    <property type="component" value="Unplaced"/>
</dbReference>
<dbReference type="GO" id="GO:0005741">
    <property type="term" value="C:mitochondrial outer membrane"/>
    <property type="evidence" value="ECO:0007669"/>
    <property type="project" value="UniProtKB-SubCell"/>
</dbReference>
<dbReference type="GO" id="GO:0005739">
    <property type="term" value="C:mitochondrion"/>
    <property type="evidence" value="ECO:0000250"/>
    <property type="project" value="UniProtKB"/>
</dbReference>
<dbReference type="GO" id="GO:0043005">
    <property type="term" value="C:neuron projection"/>
    <property type="evidence" value="ECO:0007669"/>
    <property type="project" value="UniProtKB-KW"/>
</dbReference>
<dbReference type="GO" id="GO:0045202">
    <property type="term" value="C:synapse"/>
    <property type="evidence" value="ECO:0007669"/>
    <property type="project" value="UniProtKB-SubCell"/>
</dbReference>
<dbReference type="GO" id="GO:0005524">
    <property type="term" value="F:ATP binding"/>
    <property type="evidence" value="ECO:0007669"/>
    <property type="project" value="UniProtKB-KW"/>
</dbReference>
<dbReference type="GO" id="GO:0004672">
    <property type="term" value="F:protein kinase activity"/>
    <property type="evidence" value="ECO:0000250"/>
    <property type="project" value="UniProtKB"/>
</dbReference>
<dbReference type="GO" id="GO:0106310">
    <property type="term" value="F:protein serine kinase activity"/>
    <property type="evidence" value="ECO:0007669"/>
    <property type="project" value="RHEA"/>
</dbReference>
<dbReference type="GO" id="GO:0004674">
    <property type="term" value="F:protein serine/threonine kinase activity"/>
    <property type="evidence" value="ECO:0007669"/>
    <property type="project" value="UniProtKB-KW"/>
</dbReference>
<dbReference type="GO" id="GO:0006915">
    <property type="term" value="P:apoptotic process"/>
    <property type="evidence" value="ECO:0007669"/>
    <property type="project" value="UniProtKB-KW"/>
</dbReference>
<dbReference type="GO" id="GO:0071363">
    <property type="term" value="P:cellular response to growth factor stimulus"/>
    <property type="evidence" value="ECO:0000250"/>
    <property type="project" value="UniProtKB"/>
</dbReference>
<dbReference type="GO" id="GO:0044539">
    <property type="term" value="P:long-chain fatty acid import into cell"/>
    <property type="evidence" value="ECO:0000250"/>
    <property type="project" value="UniProtKB"/>
</dbReference>
<dbReference type="GO" id="GO:0043066">
    <property type="term" value="P:negative regulation of apoptotic process"/>
    <property type="evidence" value="ECO:0000250"/>
    <property type="project" value="UniProtKB"/>
</dbReference>
<dbReference type="GO" id="GO:0046627">
    <property type="term" value="P:negative regulation of insulin receptor signaling pathway"/>
    <property type="evidence" value="ECO:0000250"/>
    <property type="project" value="UniProtKB"/>
</dbReference>
<dbReference type="GO" id="GO:1903940">
    <property type="term" value="P:negative regulation of TORC2 signaling"/>
    <property type="evidence" value="ECO:0000250"/>
    <property type="project" value="UniProtKB"/>
</dbReference>
<dbReference type="GO" id="GO:0018105">
    <property type="term" value="P:peptidyl-serine phosphorylation"/>
    <property type="evidence" value="ECO:0000250"/>
    <property type="project" value="UniProtKB"/>
</dbReference>
<dbReference type="GO" id="GO:0031929">
    <property type="term" value="P:TOR signaling"/>
    <property type="evidence" value="ECO:0000250"/>
    <property type="project" value="UniProtKB"/>
</dbReference>
<dbReference type="CDD" id="cd05584">
    <property type="entry name" value="STKc_p70S6K"/>
    <property type="match status" value="1"/>
</dbReference>
<dbReference type="FunFam" id="3.30.200.20:FF:001128">
    <property type="entry name" value="Non-specific serine/threonine protein kinase"/>
    <property type="match status" value="1"/>
</dbReference>
<dbReference type="FunFam" id="1.10.510.10:FF:000092">
    <property type="entry name" value="Ribosomal protein S6 kinase"/>
    <property type="match status" value="1"/>
</dbReference>
<dbReference type="FunFam" id="3.30.200.20:FF:000686">
    <property type="entry name" value="Ribosomal protein S6 kinase"/>
    <property type="match status" value="1"/>
</dbReference>
<dbReference type="Gene3D" id="3.30.200.20">
    <property type="entry name" value="Phosphorylase Kinase, domain 1"/>
    <property type="match status" value="1"/>
</dbReference>
<dbReference type="Gene3D" id="1.10.510.10">
    <property type="entry name" value="Transferase(Phosphotransferase) domain 1"/>
    <property type="match status" value="1"/>
</dbReference>
<dbReference type="InterPro" id="IPR000961">
    <property type="entry name" value="AGC-kinase_C"/>
</dbReference>
<dbReference type="InterPro" id="IPR011009">
    <property type="entry name" value="Kinase-like_dom_sf"/>
</dbReference>
<dbReference type="InterPro" id="IPR017892">
    <property type="entry name" value="Pkinase_C"/>
</dbReference>
<dbReference type="InterPro" id="IPR000719">
    <property type="entry name" value="Prot_kinase_dom"/>
</dbReference>
<dbReference type="InterPro" id="IPR017441">
    <property type="entry name" value="Protein_kinase_ATP_BS"/>
</dbReference>
<dbReference type="InterPro" id="IPR016238">
    <property type="entry name" value="Ribosomal_S6_kinase"/>
</dbReference>
<dbReference type="InterPro" id="IPR008271">
    <property type="entry name" value="Ser/Thr_kinase_AS"/>
</dbReference>
<dbReference type="PANTHER" id="PTHR24351">
    <property type="entry name" value="RIBOSOMAL PROTEIN S6 KINASE"/>
    <property type="match status" value="1"/>
</dbReference>
<dbReference type="Pfam" id="PF00069">
    <property type="entry name" value="Pkinase"/>
    <property type="match status" value="1"/>
</dbReference>
<dbReference type="Pfam" id="PF00433">
    <property type="entry name" value="Pkinase_C"/>
    <property type="match status" value="1"/>
</dbReference>
<dbReference type="PIRSF" id="PIRSF000605">
    <property type="entry name" value="Ribsml_S6_kin_1"/>
    <property type="match status" value="1"/>
</dbReference>
<dbReference type="SMART" id="SM00133">
    <property type="entry name" value="S_TK_X"/>
    <property type="match status" value="1"/>
</dbReference>
<dbReference type="SMART" id="SM00220">
    <property type="entry name" value="S_TKc"/>
    <property type="match status" value="1"/>
</dbReference>
<dbReference type="SUPFAM" id="SSF56112">
    <property type="entry name" value="Protein kinase-like (PK-like)"/>
    <property type="match status" value="1"/>
</dbReference>
<dbReference type="PROSITE" id="PS51285">
    <property type="entry name" value="AGC_KINASE_CTER"/>
    <property type="match status" value="1"/>
</dbReference>
<dbReference type="PROSITE" id="PS00107">
    <property type="entry name" value="PROTEIN_KINASE_ATP"/>
    <property type="match status" value="1"/>
</dbReference>
<dbReference type="PROSITE" id="PS50011">
    <property type="entry name" value="PROTEIN_KINASE_DOM"/>
    <property type="match status" value="1"/>
</dbReference>
<dbReference type="PROSITE" id="PS00108">
    <property type="entry name" value="PROTEIN_KINASE_ST"/>
    <property type="match status" value="1"/>
</dbReference>
<accession>P67998</accession>
<accession>P21425</accession>
<evidence type="ECO:0000250" key="1"/>
<evidence type="ECO:0000250" key="2">
    <source>
        <dbReference type="UniProtKB" id="P23443"/>
    </source>
</evidence>
<evidence type="ECO:0000250" key="3">
    <source>
        <dbReference type="UniProtKB" id="P67999"/>
    </source>
</evidence>
<evidence type="ECO:0000250" key="4">
    <source>
        <dbReference type="UniProtKB" id="Q8BSK8"/>
    </source>
</evidence>
<evidence type="ECO:0000255" key="5">
    <source>
        <dbReference type="PROSITE-ProRule" id="PRU00159"/>
    </source>
</evidence>
<evidence type="ECO:0000255" key="6">
    <source>
        <dbReference type="PROSITE-ProRule" id="PRU00618"/>
    </source>
</evidence>
<evidence type="ECO:0000255" key="7">
    <source>
        <dbReference type="PROSITE-ProRule" id="PRU10027"/>
    </source>
</evidence>
<evidence type="ECO:0000256" key="8">
    <source>
        <dbReference type="SAM" id="MobiDB-lite"/>
    </source>
</evidence>
<evidence type="ECO:0000305" key="9"/>
<name>KS6B1_RABIT</name>
<comment type="function">
    <text evidence="2 3 4">Serine/threonine-protein kinase that acts downstream of mTOR signaling in response to growth factors and nutrients to promote cell proliferation, cell growth and cell cycle progression. Regulates protein synthesis through phosphorylation of EIF4B, RPS6 and EEF2K, and contributes to cell survival by repressing the pro-apoptotic function of BAD. Under conditions of nutrient depletion, the inactive form associates with the EIF3 translation initiation complex. Upon mitogenic stimulation, phosphorylation by the mechanistic target of rapamycin complex 1 (mTORC1) leads to dissociation from the EIF3 complex and activation. The active form then phosphorylates and activates several substrates in the pre-initiation complex, including the EIF2B complex and the cap-binding complex component EIF4B. Also controls translation initiation by phosphorylating a negative regulator of EIF4A, PDCD4, targeting it for ubiquitination and subsequent proteolysis. Promotes initiation of the pioneer round of protein synthesis by phosphorylating POLDIP3/SKAR. In response to IGF1, activates translation elongation by phosphorylating EEF2 kinase (EEF2K), which leads to its inhibition and thus activation of EEF2. Also plays a role in feedback regulation of mTORC2 by mTORC1 by phosphorylating MAPKAP1/SIN1, MTOR and RICTOR, resulting in the inhibition of mTORC2 and AKT1 signaling. Also involved in feedback regulation of mTORC1 and mTORC2 by phosphorylating DEPTOR (By similarity). Mediates cell survival by phosphorylating the pro-apoptotic protein BAD and suppressing its pro-apoptotic function (By similarity). Phosphorylates mitochondrial URI1 leading to dissociation of a URI1-PPP1CC complex. The free mitochondrial PPP1CC can then dephosphorylate RPS6KB1 at Thr-412, which is proposed to be a negative feedback mechanism for the RPS6KB1 anti-apoptotic function. Mediates TNF-alpha-induced insulin resistance by phosphorylating IRS1 at multiple serine residues, resulting in accelerated degradation of IRS1. In cells lacking functional TSC1-2 complex, constitutively phosphorylates and inhibits GSK3B (By similarity). May be involved in cytoskeletal rearrangement through binding to neurabin (By similarity). Phosphorylates and activates the pyrimidine biosynthesis enzyme CAD, downstream of MTOR. Following activation by mTORC1, phosphorylates EPRS and thereby plays a key role in fatty acid uptake by adipocytes and also most probably in interferon-gamma-induced translation inhibition (By similarity).</text>
</comment>
<comment type="catalytic activity">
    <reaction evidence="2">
        <text>L-seryl-[protein] + ATP = O-phospho-L-seryl-[protein] + ADP + H(+)</text>
        <dbReference type="Rhea" id="RHEA:17989"/>
        <dbReference type="Rhea" id="RHEA-COMP:9863"/>
        <dbReference type="Rhea" id="RHEA-COMP:11604"/>
        <dbReference type="ChEBI" id="CHEBI:15378"/>
        <dbReference type="ChEBI" id="CHEBI:29999"/>
        <dbReference type="ChEBI" id="CHEBI:30616"/>
        <dbReference type="ChEBI" id="CHEBI:83421"/>
        <dbReference type="ChEBI" id="CHEBI:456216"/>
        <dbReference type="EC" id="2.7.11.1"/>
    </reaction>
</comment>
<comment type="catalytic activity">
    <reaction evidence="2">
        <text>L-threonyl-[protein] + ATP = O-phospho-L-threonyl-[protein] + ADP + H(+)</text>
        <dbReference type="Rhea" id="RHEA:46608"/>
        <dbReference type="Rhea" id="RHEA-COMP:11060"/>
        <dbReference type="Rhea" id="RHEA-COMP:11605"/>
        <dbReference type="ChEBI" id="CHEBI:15378"/>
        <dbReference type="ChEBI" id="CHEBI:30013"/>
        <dbReference type="ChEBI" id="CHEBI:30616"/>
        <dbReference type="ChEBI" id="CHEBI:61977"/>
        <dbReference type="ChEBI" id="CHEBI:456216"/>
        <dbReference type="EC" id="2.7.11.1"/>
    </reaction>
</comment>
<comment type="activity regulation">
    <text evidence="1">Activation requires multiple phosphorylation events on serine/threonine residues. Activation appears to be first mediated by phosphorylation of multiple sites in the autoinhibitory domain, which facilitates phosphorylation at Thr-412, disrupting the autoinhibitory mechanism and allowing phosphorylation of Thr-252 by PDPK1. The active conformation of the kinase is believed to be stabilized by a mechanism involving three conserved phosphorylation sites located in the kinase domain activation loop (Thr-252) and in the AGC-kinase C-terminal domain (Ser-394 in the middle of the tail/linker region and Thr-412 within a hydrophobic motif at its end). Activated by mTORC1; isoform Alpha I and isoform Alpha II are sensitive to rapamycin, which inhibits activating phosphorylation at Thr-412. Activated by PDPK1 (By similarity).</text>
</comment>
<comment type="subunit">
    <text evidence="2 3">Interacts with PPP1R9A/neurabin-1. Interacts with RPTOR. Interacts with IRS1. Interacts with EIF3B and EIF3C. Interacts with TRAF4. Interacts with POLDIP3. Interacts (via N-terminus) with IER5.</text>
</comment>
<comment type="subcellular location">
    <subcellularLocation>
        <location evidence="1">Cytoplasm</location>
    </subcellularLocation>
    <subcellularLocation>
        <location evidence="1">Synapse</location>
        <location evidence="1">Synaptosome</location>
    </subcellularLocation>
    <subcellularLocation>
        <location evidence="1">Mitochondrion outer membrane</location>
    </subcellularLocation>
    <subcellularLocation>
        <location evidence="1">Mitochondrion</location>
    </subcellularLocation>
    <text evidence="1">Colocalizes with URI1 at mitochondrion.</text>
</comment>
<comment type="alternative products">
    <event type="alternative initiation"/>
    <isoform>
        <id>P67998-1</id>
        <name>Alpha I</name>
        <sequence type="displayed"/>
    </isoform>
    <isoform>
        <id>P67998-2</id>
        <name>Alpha II</name>
        <sequence type="described" ref="VSP_018841"/>
    </isoform>
</comment>
<comment type="domain">
    <text evidence="1">The autoinhibitory domain is believed to block phosphorylation within the AGC-kinase C-terminal domain and the activation loop.</text>
</comment>
<comment type="domain">
    <text evidence="1">The TOS (TOR signaling) motif is essential for activation by mTORC1.</text>
</comment>
<comment type="PTM">
    <text evidence="1">Phosphorylation at Thr-412 is regulated by mTORC1. The phosphorylation at this site is maintained by an agonist-dependent autophosphorylation mechanism. Activated by phosphorylation at Thr-252 by PDPK1. Dephosphorylation by PPP1CC at Thr-412 in mitochondrion (By similarity).</text>
</comment>
<comment type="similarity">
    <text evidence="9">Belongs to the protein kinase superfamily. AGC Ser/Thr protein kinase family. S6 kinase subfamily.</text>
</comment>
<protein>
    <recommendedName>
        <fullName>Ribosomal protein S6 kinase beta-1</fullName>
        <shortName>S6K-beta-1</shortName>
        <shortName>S6K1</shortName>
        <ecNumber evidence="2">2.7.11.1</ecNumber>
    </recommendedName>
    <alternativeName>
        <fullName>70 kDa ribosomal protein S6 kinase 1</fullName>
        <shortName>P70S6K1</shortName>
        <shortName>p70-S6K 1</shortName>
    </alternativeName>
    <alternativeName>
        <fullName>Ribosomal protein S6 kinase I</fullName>
    </alternativeName>
    <alternativeName>
        <fullName>p70 ribosomal S6 kinase alpha</fullName>
        <shortName>p70 S6 kinase alpha</shortName>
        <shortName>p70 S6K-alpha</shortName>
        <shortName>p70 S6KA</shortName>
    </alternativeName>
</protein>
<organism>
    <name type="scientific">Oryctolagus cuniculus</name>
    <name type="common">Rabbit</name>
    <dbReference type="NCBI Taxonomy" id="9986"/>
    <lineage>
        <taxon>Eukaryota</taxon>
        <taxon>Metazoa</taxon>
        <taxon>Chordata</taxon>
        <taxon>Craniata</taxon>
        <taxon>Vertebrata</taxon>
        <taxon>Euteleostomi</taxon>
        <taxon>Mammalia</taxon>
        <taxon>Eutheria</taxon>
        <taxon>Euarchontoglires</taxon>
        <taxon>Glires</taxon>
        <taxon>Lagomorpha</taxon>
        <taxon>Leporidae</taxon>
        <taxon>Oryctolagus</taxon>
    </lineage>
</organism>
<proteinExistence type="evidence at transcript level"/>
<reference key="1">
    <citation type="journal article" date="1990" name="FEBS Lett.">
        <title>cDNA encoding a 59 kDa homolog of ribosomal protein S6 kinase from rabbit liver.</title>
        <authorList>
            <person name="Harmann B."/>
            <person name="Kilimann M.W."/>
        </authorList>
    </citation>
    <scope>NUCLEOTIDE SEQUENCE [MRNA]</scope>
    <source>
        <tissue>Liver</tissue>
    </source>
</reference>